<sequence>MKTVPAMLVTPRSFREFFILLLGLWSILCKEPTKRIGEECRVQLKIKRNSSRSAWTGELFKIECPVTYCVHRPNVTWCKHNGTRCVPLEVGPQLHTSWVENDQASAFVLYFEPIHLSDDGVYTCSANLNSEVINSHSVVIHVTERTQNCSEHPLITASDIPDATNASRPSTMEERPGRTWLLYALLPLGTSLLLLACVCLLCFLRRIQGKEKKPSDLAGRERETNLVDIPVSSRTNSQILTSETGIYDNDPWSSRLGESESTISSQLEGNKQGIVYASLNHCVIGRTPRQASKIQEAPTEYASICVRS</sequence>
<comment type="function">
    <text evidence="2 3">Inhibitory receptor on lymphocytes that negatively regulates antigen receptor signaling via PTPN6/SHP-1 and PTPN11/SHP-2. May interact in cis (on the same cell) or in trans (on other cells) with TNFRSF14. In cis interactions, appears to play an immune regulatory role inhibiting in trans interactions in naive T cells to maintain a resting state. In trans interactions, can predominate during adaptive immune response to provide survival signals to effector T cells.</text>
</comment>
<comment type="subunit">
    <text evidence="2 3">Interacts with tyrosine phosphatases PTPN6/SHP-1 and PTPN11/SHP-2. Interacts with TNFRSF14/HVEM (via cysteine-rich domain 1).</text>
</comment>
<comment type="subcellular location">
    <subcellularLocation>
        <location evidence="2 3">Cell membrane</location>
        <topology evidence="7">Single-pass type I membrane protein</topology>
    </subcellularLocation>
</comment>
<comment type="alternative products">
    <event type="alternative splicing"/>
    <isoform>
        <id>Q6PNM1-1</id>
        <name>1</name>
        <sequence type="displayed"/>
    </isoform>
    <isoform>
        <id>Q6PNM1-2</id>
        <name>2</name>
        <sequence type="described" ref="VSP_014838"/>
    </isoform>
</comment>
<comment type="PTM">
    <text evidence="1">Phosphorylated on Tyr residues by TNFRSF14 and by antigen receptors cross-linking, both inducing association with PTPN6 and PTPN11.</text>
</comment>
<comment type="PTM">
    <text evidence="1">N-glycosylated.</text>
</comment>
<organism>
    <name type="scientific">Rattus norvegicus</name>
    <name type="common">Rat</name>
    <dbReference type="NCBI Taxonomy" id="10116"/>
    <lineage>
        <taxon>Eukaryota</taxon>
        <taxon>Metazoa</taxon>
        <taxon>Chordata</taxon>
        <taxon>Craniata</taxon>
        <taxon>Vertebrata</taxon>
        <taxon>Euteleostomi</taxon>
        <taxon>Mammalia</taxon>
        <taxon>Eutheria</taxon>
        <taxon>Euarchontoglires</taxon>
        <taxon>Glires</taxon>
        <taxon>Rodentia</taxon>
        <taxon>Myomorpha</taxon>
        <taxon>Muroidea</taxon>
        <taxon>Muridae</taxon>
        <taxon>Murinae</taxon>
        <taxon>Rattus</taxon>
    </lineage>
</organism>
<dbReference type="EMBL" id="AY590499">
    <property type="protein sequence ID" value="AAT00435.1"/>
    <property type="molecule type" value="mRNA"/>
</dbReference>
<dbReference type="EMBL" id="BC092588">
    <property type="protein sequence ID" value="AAH92588.1"/>
    <property type="molecule type" value="mRNA"/>
</dbReference>
<dbReference type="RefSeq" id="NP_998795.1">
    <property type="nucleotide sequence ID" value="NM_213630.1"/>
</dbReference>
<dbReference type="SMR" id="Q6PNM1"/>
<dbReference type="FunCoup" id="Q6PNM1">
    <property type="interactions" value="41"/>
</dbReference>
<dbReference type="STRING" id="10116.ENSRNOP00000050172"/>
<dbReference type="GlyCosmos" id="Q6PNM1">
    <property type="glycosylation" value="5 sites, No reported glycans"/>
</dbReference>
<dbReference type="GlyGen" id="Q6PNM1">
    <property type="glycosylation" value="5 sites"/>
</dbReference>
<dbReference type="PhosphoSitePlus" id="Q6PNM1"/>
<dbReference type="PaxDb" id="10116-ENSRNOP00000050172"/>
<dbReference type="GeneID" id="407756"/>
<dbReference type="KEGG" id="rno:407756"/>
<dbReference type="UCSC" id="RGD:1303280">
    <molecule id="Q6PNM1-1"/>
    <property type="organism name" value="rat"/>
</dbReference>
<dbReference type="AGR" id="RGD:1303280"/>
<dbReference type="CTD" id="151888"/>
<dbReference type="RGD" id="1303280">
    <property type="gene designation" value="Btla"/>
</dbReference>
<dbReference type="eggNOG" id="ENOG502SGTG">
    <property type="taxonomic scope" value="Eukaryota"/>
</dbReference>
<dbReference type="InParanoid" id="Q6PNM1"/>
<dbReference type="PhylomeDB" id="Q6PNM1"/>
<dbReference type="Reactome" id="R-RNO-9927353">
    <property type="pathway name" value="Co-inhibition by BTLA"/>
</dbReference>
<dbReference type="PRO" id="PR:Q6PNM1"/>
<dbReference type="Proteomes" id="UP000002494">
    <property type="component" value="Unplaced"/>
</dbReference>
<dbReference type="GO" id="GO:0009897">
    <property type="term" value="C:external side of plasma membrane"/>
    <property type="evidence" value="ECO:0000266"/>
    <property type="project" value="RGD"/>
</dbReference>
<dbReference type="GO" id="GO:0005886">
    <property type="term" value="C:plasma membrane"/>
    <property type="evidence" value="ECO:0000266"/>
    <property type="project" value="RGD"/>
</dbReference>
<dbReference type="GO" id="GO:0038023">
    <property type="term" value="F:signaling receptor activity"/>
    <property type="evidence" value="ECO:0000266"/>
    <property type="project" value="RGD"/>
</dbReference>
<dbReference type="GO" id="GO:0002250">
    <property type="term" value="P:adaptive immune response"/>
    <property type="evidence" value="ECO:0007669"/>
    <property type="project" value="UniProtKB-KW"/>
</dbReference>
<dbReference type="GO" id="GO:0007166">
    <property type="term" value="P:cell surface receptor signaling pathway"/>
    <property type="evidence" value="ECO:0000266"/>
    <property type="project" value="RGD"/>
</dbReference>
<dbReference type="GO" id="GO:0002768">
    <property type="term" value="P:immune response-regulating cell surface receptor signaling pathway"/>
    <property type="evidence" value="ECO:0000266"/>
    <property type="project" value="RGD"/>
</dbReference>
<dbReference type="GO" id="GO:0046642">
    <property type="term" value="P:negative regulation of alpha-beta T cell proliferation"/>
    <property type="evidence" value="ECO:0000266"/>
    <property type="project" value="RGD"/>
</dbReference>
<dbReference type="GO" id="GO:0030889">
    <property type="term" value="P:negative regulation of B cell proliferation"/>
    <property type="evidence" value="ECO:0000266"/>
    <property type="project" value="RGD"/>
</dbReference>
<dbReference type="GO" id="GO:0042130">
    <property type="term" value="P:negative regulation of T cell proliferation"/>
    <property type="evidence" value="ECO:0000266"/>
    <property type="project" value="RGD"/>
</dbReference>
<dbReference type="Gene3D" id="2.60.40.10">
    <property type="entry name" value="Immunoglobulins"/>
    <property type="match status" value="1"/>
</dbReference>
<dbReference type="InterPro" id="IPR039257">
    <property type="entry name" value="BTLA"/>
</dbReference>
<dbReference type="InterPro" id="IPR007110">
    <property type="entry name" value="Ig-like_dom"/>
</dbReference>
<dbReference type="InterPro" id="IPR036179">
    <property type="entry name" value="Ig-like_dom_sf"/>
</dbReference>
<dbReference type="InterPro" id="IPR013783">
    <property type="entry name" value="Ig-like_fold"/>
</dbReference>
<dbReference type="InterPro" id="IPR003599">
    <property type="entry name" value="Ig_sub"/>
</dbReference>
<dbReference type="PANTHER" id="PTHR37996">
    <property type="entry name" value="B- AND T-LYMPHOCYTE ATTENUATOR"/>
    <property type="match status" value="1"/>
</dbReference>
<dbReference type="PANTHER" id="PTHR37996:SF1">
    <property type="entry name" value="B- AND T-LYMPHOCYTE ATTENUATOR"/>
    <property type="match status" value="1"/>
</dbReference>
<dbReference type="SMART" id="SM00409">
    <property type="entry name" value="IG"/>
    <property type="match status" value="1"/>
</dbReference>
<dbReference type="SUPFAM" id="SSF48726">
    <property type="entry name" value="Immunoglobulin"/>
    <property type="match status" value="1"/>
</dbReference>
<dbReference type="PROSITE" id="PS50835">
    <property type="entry name" value="IG_LIKE"/>
    <property type="match status" value="1"/>
</dbReference>
<proteinExistence type="evidence at protein level"/>
<name>BTLA_RAT</name>
<gene>
    <name evidence="2 3" type="primary">Btla</name>
</gene>
<accession>Q6PNM1</accession>
<accession>Q569B2</accession>
<feature type="signal peptide" evidence="4">
    <location>
        <begin position="1"/>
        <end position="29"/>
    </location>
</feature>
<feature type="chain" id="PRO_0000014525" description="B- and T-lymphocyte attenuator">
    <location>
        <begin position="30"/>
        <end position="308"/>
    </location>
</feature>
<feature type="topological domain" description="Extracellular" evidence="4">
    <location>
        <begin position="30"/>
        <end position="183"/>
    </location>
</feature>
<feature type="transmembrane region" description="Helical" evidence="4">
    <location>
        <begin position="184"/>
        <end position="204"/>
    </location>
</feature>
<feature type="topological domain" description="Cytoplasmic" evidence="4">
    <location>
        <begin position="205"/>
        <end position="308"/>
    </location>
</feature>
<feature type="domain" description="Ig-like V-type">
    <location>
        <begin position="32"/>
        <end position="134"/>
    </location>
</feature>
<feature type="glycosylation site" description="N-linked (GlcNAc...) asparagine" evidence="4">
    <location>
        <position position="49"/>
    </location>
</feature>
<feature type="glycosylation site" description="N-linked (GlcNAc...) asparagine" evidence="4">
    <location>
        <position position="74"/>
    </location>
</feature>
<feature type="glycosylation site" description="N-linked (GlcNAc...) asparagine" evidence="4">
    <location>
        <position position="81"/>
    </location>
</feature>
<feature type="glycosylation site" description="N-linked (GlcNAc...) asparagine" evidence="4">
    <location>
        <position position="148"/>
    </location>
</feature>
<feature type="glycosylation site" description="N-linked (GlcNAc...) asparagine" evidence="4">
    <location>
        <position position="165"/>
    </location>
</feature>
<feature type="disulfide bond" evidence="5">
    <location>
        <begin position="40"/>
        <end position="69"/>
    </location>
</feature>
<feature type="disulfide bond" evidence="5">
    <location>
        <begin position="64"/>
        <end position="124"/>
    </location>
</feature>
<feature type="disulfide bond" evidence="5">
    <location>
        <begin position="78"/>
        <end position="85"/>
    </location>
</feature>
<feature type="splice variant" id="VSP_014838" description="In isoform 2." evidence="6">
    <location>
        <begin position="156"/>
        <end position="167"/>
    </location>
</feature>
<feature type="sequence conflict" description="In Ref. 2; AAH92588." evidence="7" ref="2">
    <original>V</original>
    <variation>L</variation>
    <location>
        <position position="4"/>
    </location>
</feature>
<keyword id="KW-1064">Adaptive immunity</keyword>
<keyword id="KW-0025">Alternative splicing</keyword>
<keyword id="KW-1003">Cell membrane</keyword>
<keyword id="KW-1015">Disulfide bond</keyword>
<keyword id="KW-0325">Glycoprotein</keyword>
<keyword id="KW-0391">Immunity</keyword>
<keyword id="KW-0393">Immunoglobulin domain</keyword>
<keyword id="KW-0472">Membrane</keyword>
<keyword id="KW-0597">Phosphoprotein</keyword>
<keyword id="KW-0675">Receptor</keyword>
<keyword id="KW-1185">Reference proteome</keyword>
<keyword id="KW-0732">Signal</keyword>
<keyword id="KW-0812">Transmembrane</keyword>
<keyword id="KW-1133">Transmembrane helix</keyword>
<protein>
    <recommendedName>
        <fullName evidence="2 3">B- and T-lymphocyte attenuator</fullName>
    </recommendedName>
    <alternativeName>
        <fullName>B- and T-lymphocyte-associated protein</fullName>
    </alternativeName>
    <cdAntigenName>CD272</cdAntigenName>
</protein>
<reference key="1">
    <citation type="submission" date="2004-04" db="EMBL/GenBank/DDBJ databases">
        <title>Nucleotide sequence of the rat BTLA receptor.</title>
        <authorList>
            <person name="Oaks M.K."/>
            <person name="Hallett K.M."/>
            <person name="Oaks T.M."/>
        </authorList>
    </citation>
    <scope>NUCLEOTIDE SEQUENCE [MRNA] (ISOFORM 1)</scope>
    <source>
        <strain>Lewis</strain>
    </source>
</reference>
<reference key="2">
    <citation type="journal article" date="2004" name="Genome Res.">
        <title>The status, quality, and expansion of the NIH full-length cDNA project: the Mammalian Gene Collection (MGC).</title>
        <authorList>
            <consortium name="The MGC Project Team"/>
        </authorList>
    </citation>
    <scope>NUCLEOTIDE SEQUENCE [LARGE SCALE MRNA] (ISOFORM 2)</scope>
    <source>
        <tissue>Spleen</tissue>
    </source>
</reference>
<reference key="3">
    <citation type="journal article" date="2012" name="Nat. Commun.">
        <title>Quantitative maps of protein phosphorylation sites across 14 different rat organs and tissues.</title>
        <authorList>
            <person name="Lundby A."/>
            <person name="Secher A."/>
            <person name="Lage K."/>
            <person name="Nordsborg N.B."/>
            <person name="Dmytriyev A."/>
            <person name="Lundby C."/>
            <person name="Olsen J.V."/>
        </authorList>
    </citation>
    <scope>IDENTIFICATION BY MASS SPECTROMETRY [LARGE SCALE ANALYSIS]</scope>
</reference>
<evidence type="ECO:0000250" key="1"/>
<evidence type="ECO:0000250" key="2">
    <source>
        <dbReference type="UniProtKB" id="Q7TSA3"/>
    </source>
</evidence>
<evidence type="ECO:0000250" key="3">
    <source>
        <dbReference type="UniProtKB" id="Q7Z6A9"/>
    </source>
</evidence>
<evidence type="ECO:0000255" key="4"/>
<evidence type="ECO:0000255" key="5">
    <source>
        <dbReference type="PROSITE-ProRule" id="PRU00114"/>
    </source>
</evidence>
<evidence type="ECO:0000303" key="6">
    <source>
    </source>
</evidence>
<evidence type="ECO:0000305" key="7"/>